<protein>
    <recommendedName>
        <fullName evidence="2">Sulfoquinovose isomerase</fullName>
        <shortName evidence="2">SQ isomerase</shortName>
        <ecNumber evidence="1">5.3.1.31</ecNumber>
    </recommendedName>
</protein>
<proteinExistence type="evidence at protein level"/>
<accession>J1H1H5</accession>
<comment type="function">
    <text evidence="1">Part of the sulfo-TK pathway, a D-sulfoquinovose degradation pathway that produces 2-hydroxyethane-1-sulfonate (isethionate) (Ref.2). Catalyzes the isomerization of sulfoquinovose (SQ) to 6-deoxy-6-sulfo-D-fructose (SF) (Ref.2).</text>
</comment>
<comment type="catalytic activity">
    <reaction evidence="1">
        <text>6-sulfo-beta-D-quinovose = 6-deoxy-6-sulfo-D-fructose</text>
        <dbReference type="Rhea" id="RHEA:40439"/>
        <dbReference type="ChEBI" id="CHEBI:77133"/>
        <dbReference type="ChEBI" id="CHEBI:142957"/>
        <dbReference type="EC" id="5.3.1.31"/>
    </reaction>
    <physiologicalReaction direction="left-to-right" evidence="1">
        <dbReference type="Rhea" id="RHEA:40440"/>
    </physiologicalReaction>
</comment>
<comment type="similarity">
    <text evidence="3">Belongs to the SqvD family.</text>
</comment>
<name>SQVD_CLOS9</name>
<dbReference type="EC" id="5.3.1.31" evidence="1"/>
<dbReference type="EMBL" id="AKFU01000044">
    <property type="protein sequence ID" value="EJF39088.1"/>
    <property type="molecule type" value="Genomic_DNA"/>
</dbReference>
<dbReference type="RefSeq" id="WP_009065217.1">
    <property type="nucleotide sequence ID" value="NZ_AKFU01000044.1"/>
</dbReference>
<dbReference type="SMR" id="J1H1H5"/>
<dbReference type="STRING" id="1105031.HMPREF1141_0611"/>
<dbReference type="PATRIC" id="fig|1105031.3.peg.2803"/>
<dbReference type="eggNOG" id="COG2407">
    <property type="taxonomic scope" value="Bacteria"/>
</dbReference>
<dbReference type="BioCyc" id="MetaCyc:MONOMER-21936"/>
<dbReference type="Proteomes" id="UP000004073">
    <property type="component" value="Unassembled WGS sequence"/>
</dbReference>
<dbReference type="GO" id="GO:0005737">
    <property type="term" value="C:cytoplasm"/>
    <property type="evidence" value="ECO:0007669"/>
    <property type="project" value="InterPro"/>
</dbReference>
<dbReference type="GO" id="GO:0008736">
    <property type="term" value="F:L-fucose isomerase activity"/>
    <property type="evidence" value="ECO:0007669"/>
    <property type="project" value="UniProtKB-EC"/>
</dbReference>
<dbReference type="GO" id="GO:0005996">
    <property type="term" value="P:monosaccharide metabolic process"/>
    <property type="evidence" value="ECO:0007669"/>
    <property type="project" value="InterPro"/>
</dbReference>
<dbReference type="InterPro" id="IPR009015">
    <property type="entry name" value="Fucose_isomerase_N/cen_sf"/>
</dbReference>
<dbReference type="PANTHER" id="PTHR36120">
    <property type="entry name" value="FUCOSE ISOMERASE"/>
    <property type="match status" value="1"/>
</dbReference>
<dbReference type="PANTHER" id="PTHR36120:SF1">
    <property type="entry name" value="L-FUCOSE ISOMERASE C-TERMINAL DOMAIN-CONTAINING PROTEIN"/>
    <property type="match status" value="1"/>
</dbReference>
<dbReference type="SUPFAM" id="SSF53743">
    <property type="entry name" value="FucI/AraA N-terminal and middle domains"/>
    <property type="match status" value="1"/>
</dbReference>
<keyword id="KW-0119">Carbohydrate metabolism</keyword>
<keyword id="KW-0413">Isomerase</keyword>
<keyword id="KW-1185">Reference proteome</keyword>
<feature type="chain" id="PRO_0000458934" description="Sulfoquinovose isomerase">
    <location>
        <begin position="1"/>
        <end position="447"/>
    </location>
</feature>
<organism>
    <name type="scientific">Clostridium sp. (strain MSTE9)</name>
    <dbReference type="NCBI Taxonomy" id="1105031"/>
    <lineage>
        <taxon>Bacteria</taxon>
        <taxon>Bacillati</taxon>
        <taxon>Bacillota</taxon>
        <taxon>Clostridia</taxon>
        <taxon>Eubacteriales</taxon>
        <taxon>Clostridiaceae</taxon>
        <taxon>Clostridium</taxon>
    </lineage>
</organism>
<sequence length="447" mass="49143">MSEYQVAYLPIGVPTFHLESAQAGFEKSVRLLTSLSTHVVCPQKMLLTIEELNTFLDMICPQLLIIQNITFANAAYASQIRHRFSCPTLLWTLREPVIDGGRLRLNSLTGAYSAANAMRALGDDRFAYVFGAPEEEAVIHKIHAFLRAGEVYHKLHSLKMAAVGHTPQGFGFGRALDSELLHTFGVTLESIETRELMEKAVSYTEEECADCRKAAEQAMTGLENTPAKNRDAFVRLYKAYDDYVKANGIGALSSRCWPDFFTAYGTPVCSVLAMLNDNLIASACESDVYGALSMYIGTQLTGLPTFFGDPVSLDEAENTITYWHCGTAACSLARADTGAQVGVHPNRKIGPTMEFGCRPAEQATVFRVGRKPDGTFRLLILPGRALDKPKQFCGTSVVVQPKADALRVVESSVKAGWEPHFTVIYGDVKDELLALADMLRLEAEVYE</sequence>
<gene>
    <name evidence="2" type="primary">sqvD</name>
    <name evidence="4" type="ORF">HMPREF1141_0611</name>
</gene>
<reference key="1">
    <citation type="submission" date="2012-05" db="EMBL/GenBank/DDBJ databases">
        <authorList>
            <person name="Harkins D.M."/>
            <person name="Madupu R."/>
            <person name="Durkin A.S."/>
            <person name="Torralba M."/>
            <person name="Methe B."/>
            <person name="Sutton G.G."/>
            <person name="Nelson K.E."/>
        </authorList>
    </citation>
    <scope>NUCLEOTIDE SEQUENCE [LARGE SCALE GENOMIC DNA]</scope>
    <source>
        <strain>MSTE9</strain>
    </source>
</reference>
<reference key="2">
    <citation type="journal article" date="2021" name="ACS Catal.">
        <title>Mechanistically diverse pathways for sulfoquinovose degradation in bacteria.</title>
        <authorList>
            <person name="Liu J."/>
            <person name="Wei Y."/>
            <person name="Ma K."/>
            <person name="An J."/>
            <person name="Liu X."/>
            <person name="Liu Y."/>
            <person name="Ang E.L."/>
            <person name="Zhao H."/>
            <person name="Zhang Y."/>
        </authorList>
    </citation>
    <scope>FUNCTION</scope>
    <scope>CATALYTIC ACTIVITY</scope>
    <source>
        <strain>MSTE9</strain>
    </source>
</reference>
<evidence type="ECO:0000269" key="1">
    <source ref="2"/>
</evidence>
<evidence type="ECO:0000303" key="2">
    <source ref="2"/>
</evidence>
<evidence type="ECO:0000305" key="3"/>
<evidence type="ECO:0000312" key="4">
    <source>
        <dbReference type="EMBL" id="EJF39088.1"/>
    </source>
</evidence>